<keyword id="KW-0963">Cytoplasm</keyword>
<keyword id="KW-0460">Magnesium</keyword>
<keyword id="KW-0479">Metal-binding</keyword>
<keyword id="KW-0566">Pantothenate biosynthesis</keyword>
<keyword id="KW-0808">Transferase</keyword>
<sequence>MRTTISQLKEMKQNKQKIAMLTAYDYPTAQILDKAGIPAILVGDSLGMVVLGYDSTVSVTMEDMLHHLKAVVRGSQKAMVIADMPFMTYHLSPEQALLNAGRFMQEGGAQAVKLEGGVNVADKVKRIVDCGIPVMGHIGLTPQSVNQLSGFKVQGKTLTAALALLEDARALEKAGAFAIVLETMPAELAAMITAAVSIPTIGIGAGENCDGQVQVVSDMLGMFTDFVPKHTKKYADLNGIISKAVSGYVTEVAKGEFPTLKESFTLDKKVLEELKKCVSSEQ</sequence>
<name>PANB_DEHM1</name>
<accession>Q3Z8B4</accession>
<dbReference type="EC" id="2.1.2.11" evidence="1"/>
<dbReference type="EMBL" id="CP000027">
    <property type="protein sequence ID" value="AAW39876.1"/>
    <property type="status" value="ALT_INIT"/>
    <property type="molecule type" value="Genomic_DNA"/>
</dbReference>
<dbReference type="RefSeq" id="WP_041223361.1">
    <property type="nucleotide sequence ID" value="NC_002936.3"/>
</dbReference>
<dbReference type="SMR" id="Q3Z8B4"/>
<dbReference type="FunCoup" id="Q3Z8B4">
    <property type="interactions" value="262"/>
</dbReference>
<dbReference type="STRING" id="243164.DET0803"/>
<dbReference type="GeneID" id="3229838"/>
<dbReference type="KEGG" id="det:DET0803"/>
<dbReference type="PATRIC" id="fig|243164.10.peg.766"/>
<dbReference type="eggNOG" id="COG0413">
    <property type="taxonomic scope" value="Bacteria"/>
</dbReference>
<dbReference type="HOGENOM" id="CLU_036645_1_0_0"/>
<dbReference type="InParanoid" id="Q3Z8B4"/>
<dbReference type="UniPathway" id="UPA00028">
    <property type="reaction ID" value="UER00003"/>
</dbReference>
<dbReference type="Proteomes" id="UP000008289">
    <property type="component" value="Chromosome"/>
</dbReference>
<dbReference type="GO" id="GO:0005737">
    <property type="term" value="C:cytoplasm"/>
    <property type="evidence" value="ECO:0007669"/>
    <property type="project" value="UniProtKB-SubCell"/>
</dbReference>
<dbReference type="GO" id="GO:0003864">
    <property type="term" value="F:3-methyl-2-oxobutanoate hydroxymethyltransferase activity"/>
    <property type="evidence" value="ECO:0007669"/>
    <property type="project" value="UniProtKB-UniRule"/>
</dbReference>
<dbReference type="GO" id="GO:0000287">
    <property type="term" value="F:magnesium ion binding"/>
    <property type="evidence" value="ECO:0007669"/>
    <property type="project" value="TreeGrafter"/>
</dbReference>
<dbReference type="GO" id="GO:0015940">
    <property type="term" value="P:pantothenate biosynthetic process"/>
    <property type="evidence" value="ECO:0007669"/>
    <property type="project" value="UniProtKB-UniRule"/>
</dbReference>
<dbReference type="CDD" id="cd06557">
    <property type="entry name" value="KPHMT-like"/>
    <property type="match status" value="1"/>
</dbReference>
<dbReference type="FunFam" id="3.20.20.60:FF:000003">
    <property type="entry name" value="3-methyl-2-oxobutanoate hydroxymethyltransferase"/>
    <property type="match status" value="1"/>
</dbReference>
<dbReference type="Gene3D" id="3.20.20.60">
    <property type="entry name" value="Phosphoenolpyruvate-binding domains"/>
    <property type="match status" value="1"/>
</dbReference>
<dbReference type="HAMAP" id="MF_00156">
    <property type="entry name" value="PanB"/>
    <property type="match status" value="1"/>
</dbReference>
<dbReference type="InterPro" id="IPR003700">
    <property type="entry name" value="Pantoate_hydroxy_MeTrfase"/>
</dbReference>
<dbReference type="InterPro" id="IPR015813">
    <property type="entry name" value="Pyrv/PenolPyrv_kinase-like_dom"/>
</dbReference>
<dbReference type="InterPro" id="IPR040442">
    <property type="entry name" value="Pyrv_kinase-like_dom_sf"/>
</dbReference>
<dbReference type="NCBIfam" id="TIGR00222">
    <property type="entry name" value="panB"/>
    <property type="match status" value="1"/>
</dbReference>
<dbReference type="NCBIfam" id="NF001452">
    <property type="entry name" value="PRK00311.1"/>
    <property type="match status" value="1"/>
</dbReference>
<dbReference type="PANTHER" id="PTHR20881">
    <property type="entry name" value="3-METHYL-2-OXOBUTANOATE HYDROXYMETHYLTRANSFERASE"/>
    <property type="match status" value="1"/>
</dbReference>
<dbReference type="PANTHER" id="PTHR20881:SF0">
    <property type="entry name" value="3-METHYL-2-OXOBUTANOATE HYDROXYMETHYLTRANSFERASE"/>
    <property type="match status" value="1"/>
</dbReference>
<dbReference type="Pfam" id="PF02548">
    <property type="entry name" value="Pantoate_transf"/>
    <property type="match status" value="1"/>
</dbReference>
<dbReference type="PIRSF" id="PIRSF000388">
    <property type="entry name" value="Pantoate_hydroxy_MeTrfase"/>
    <property type="match status" value="1"/>
</dbReference>
<dbReference type="SUPFAM" id="SSF51621">
    <property type="entry name" value="Phosphoenolpyruvate/pyruvate domain"/>
    <property type="match status" value="1"/>
</dbReference>
<protein>
    <recommendedName>
        <fullName evidence="1">3-methyl-2-oxobutanoate hydroxymethyltransferase</fullName>
        <ecNumber evidence="1">2.1.2.11</ecNumber>
    </recommendedName>
    <alternativeName>
        <fullName evidence="1">Ketopantoate hydroxymethyltransferase</fullName>
        <shortName evidence="1">KPHMT</shortName>
    </alternativeName>
</protein>
<reference key="1">
    <citation type="journal article" date="2005" name="Science">
        <title>Genome sequence of the PCE-dechlorinating bacterium Dehalococcoides ethenogenes.</title>
        <authorList>
            <person name="Seshadri R."/>
            <person name="Adrian L."/>
            <person name="Fouts D.E."/>
            <person name="Eisen J.A."/>
            <person name="Phillippy A.M."/>
            <person name="Methe B.A."/>
            <person name="Ward N.L."/>
            <person name="Nelson W.C."/>
            <person name="DeBoy R.T."/>
            <person name="Khouri H.M."/>
            <person name="Kolonay J.F."/>
            <person name="Dodson R.J."/>
            <person name="Daugherty S.C."/>
            <person name="Brinkac L.M."/>
            <person name="Sullivan S.A."/>
            <person name="Madupu R."/>
            <person name="Nelson K.E."/>
            <person name="Kang K.H."/>
            <person name="Impraim M."/>
            <person name="Tran K."/>
            <person name="Robinson J.M."/>
            <person name="Forberger H.A."/>
            <person name="Fraser C.M."/>
            <person name="Zinder S.H."/>
            <person name="Heidelberg J.F."/>
        </authorList>
    </citation>
    <scope>NUCLEOTIDE SEQUENCE [LARGE SCALE GENOMIC DNA]</scope>
    <source>
        <strain>ATCC BAA-2266 / KCTC 15142 / 195</strain>
    </source>
</reference>
<proteinExistence type="inferred from homology"/>
<gene>
    <name evidence="1" type="primary">panB</name>
    <name type="ordered locus">DET0803</name>
</gene>
<feature type="chain" id="PRO_0000297256" description="3-methyl-2-oxobutanoate hydroxymethyltransferase">
    <location>
        <begin position="1"/>
        <end position="282"/>
    </location>
</feature>
<feature type="active site" description="Proton acceptor" evidence="1">
    <location>
        <position position="182"/>
    </location>
</feature>
<feature type="binding site" evidence="1">
    <location>
        <begin position="44"/>
        <end position="45"/>
    </location>
    <ligand>
        <name>3-methyl-2-oxobutanoate</name>
        <dbReference type="ChEBI" id="CHEBI:11851"/>
    </ligand>
</feature>
<feature type="binding site" evidence="1">
    <location>
        <position position="44"/>
    </location>
    <ligand>
        <name>Mg(2+)</name>
        <dbReference type="ChEBI" id="CHEBI:18420"/>
    </ligand>
</feature>
<feature type="binding site" evidence="1">
    <location>
        <position position="83"/>
    </location>
    <ligand>
        <name>3-methyl-2-oxobutanoate</name>
        <dbReference type="ChEBI" id="CHEBI:11851"/>
    </ligand>
</feature>
<feature type="binding site" evidence="1">
    <location>
        <position position="83"/>
    </location>
    <ligand>
        <name>Mg(2+)</name>
        <dbReference type="ChEBI" id="CHEBI:18420"/>
    </ligand>
</feature>
<feature type="binding site" evidence="1">
    <location>
        <position position="113"/>
    </location>
    <ligand>
        <name>3-methyl-2-oxobutanoate</name>
        <dbReference type="ChEBI" id="CHEBI:11851"/>
    </ligand>
</feature>
<feature type="binding site" evidence="1">
    <location>
        <position position="115"/>
    </location>
    <ligand>
        <name>Mg(2+)</name>
        <dbReference type="ChEBI" id="CHEBI:18420"/>
    </ligand>
</feature>
<organism>
    <name type="scientific">Dehalococcoides mccartyi (strain ATCC BAA-2266 / KCTC 15142 / 195)</name>
    <name type="common">Dehalococcoides ethenogenes (strain 195)</name>
    <dbReference type="NCBI Taxonomy" id="243164"/>
    <lineage>
        <taxon>Bacteria</taxon>
        <taxon>Bacillati</taxon>
        <taxon>Chloroflexota</taxon>
        <taxon>Dehalococcoidia</taxon>
        <taxon>Dehalococcoidales</taxon>
        <taxon>Dehalococcoidaceae</taxon>
        <taxon>Dehalococcoides</taxon>
    </lineage>
</organism>
<comment type="function">
    <text evidence="1">Catalyzes the reversible reaction in which hydroxymethyl group from 5,10-methylenetetrahydrofolate is transferred onto alpha-ketoisovalerate to form ketopantoate.</text>
</comment>
<comment type="catalytic activity">
    <reaction evidence="1">
        <text>3-methyl-2-oxobutanoate + (6R)-5,10-methylene-5,6,7,8-tetrahydrofolate + H2O = 2-dehydropantoate + (6S)-5,6,7,8-tetrahydrofolate</text>
        <dbReference type="Rhea" id="RHEA:11824"/>
        <dbReference type="ChEBI" id="CHEBI:11561"/>
        <dbReference type="ChEBI" id="CHEBI:11851"/>
        <dbReference type="ChEBI" id="CHEBI:15377"/>
        <dbReference type="ChEBI" id="CHEBI:15636"/>
        <dbReference type="ChEBI" id="CHEBI:57453"/>
        <dbReference type="EC" id="2.1.2.11"/>
    </reaction>
</comment>
<comment type="cofactor">
    <cofactor evidence="1">
        <name>Mg(2+)</name>
        <dbReference type="ChEBI" id="CHEBI:18420"/>
    </cofactor>
    <text evidence="1">Binds 1 Mg(2+) ion per subunit.</text>
</comment>
<comment type="pathway">
    <text evidence="1">Cofactor biosynthesis; (R)-pantothenate biosynthesis; (R)-pantoate from 3-methyl-2-oxobutanoate: step 1/2.</text>
</comment>
<comment type="subunit">
    <text evidence="1">Homodecamer; pentamer of dimers.</text>
</comment>
<comment type="subcellular location">
    <subcellularLocation>
        <location evidence="1">Cytoplasm</location>
    </subcellularLocation>
</comment>
<comment type="similarity">
    <text evidence="1">Belongs to the PanB family.</text>
</comment>
<comment type="sequence caution" evidence="2">
    <conflict type="erroneous initiation">
        <sequence resource="EMBL-CDS" id="AAW39876"/>
    </conflict>
</comment>
<evidence type="ECO:0000255" key="1">
    <source>
        <dbReference type="HAMAP-Rule" id="MF_00156"/>
    </source>
</evidence>
<evidence type="ECO:0000305" key="2"/>